<comment type="function">
    <text evidence="1">Key enzyme in the regulation of glycerol uptake and metabolism. Catalyzes the phosphorylation of glycerol to yield sn-glycerol 3-phosphate.</text>
</comment>
<comment type="catalytic activity">
    <reaction evidence="1">
        <text>glycerol + ATP = sn-glycerol 3-phosphate + ADP + H(+)</text>
        <dbReference type="Rhea" id="RHEA:21644"/>
        <dbReference type="ChEBI" id="CHEBI:15378"/>
        <dbReference type="ChEBI" id="CHEBI:17754"/>
        <dbReference type="ChEBI" id="CHEBI:30616"/>
        <dbReference type="ChEBI" id="CHEBI:57597"/>
        <dbReference type="ChEBI" id="CHEBI:456216"/>
        <dbReference type="EC" id="2.7.1.30"/>
    </reaction>
</comment>
<comment type="activity regulation">
    <text evidence="1">Inhibited by fructose 1,6-bisphosphate (FBP).</text>
</comment>
<comment type="pathway">
    <text evidence="1">Polyol metabolism; glycerol degradation via glycerol kinase pathway; sn-glycerol 3-phosphate from glycerol: step 1/1.</text>
</comment>
<comment type="similarity">
    <text evidence="1">Belongs to the FGGY kinase family.</text>
</comment>
<reference key="1">
    <citation type="journal article" date="2008" name="PLoS ONE">
        <title>Genetic basis of virulence attenuation revealed by comparative genomic analysis of Mycobacterium tuberculosis strain H37Ra versus H37Rv.</title>
        <authorList>
            <person name="Zheng H."/>
            <person name="Lu L."/>
            <person name="Wang B."/>
            <person name="Pu S."/>
            <person name="Zhang X."/>
            <person name="Zhu G."/>
            <person name="Shi W."/>
            <person name="Zhang L."/>
            <person name="Wang H."/>
            <person name="Wang S."/>
            <person name="Zhao G."/>
            <person name="Zhang Y."/>
        </authorList>
    </citation>
    <scope>NUCLEOTIDE SEQUENCE [LARGE SCALE GENOMIC DNA]</scope>
    <source>
        <strain>ATCC 25177 / H37Ra</strain>
    </source>
</reference>
<organism>
    <name type="scientific">Mycobacterium tuberculosis (strain ATCC 25177 / H37Ra)</name>
    <dbReference type="NCBI Taxonomy" id="419947"/>
    <lineage>
        <taxon>Bacteria</taxon>
        <taxon>Bacillati</taxon>
        <taxon>Actinomycetota</taxon>
        <taxon>Actinomycetes</taxon>
        <taxon>Mycobacteriales</taxon>
        <taxon>Mycobacteriaceae</taxon>
        <taxon>Mycobacterium</taxon>
        <taxon>Mycobacterium tuberculosis complex</taxon>
    </lineage>
</organism>
<protein>
    <recommendedName>
        <fullName evidence="1">Glycerol kinase</fullName>
        <ecNumber evidence="1">2.7.1.30</ecNumber>
    </recommendedName>
    <alternativeName>
        <fullName evidence="1">ATP:glycerol 3-phosphotransferase</fullName>
    </alternativeName>
    <alternativeName>
        <fullName evidence="1">Glycerokinase</fullName>
        <shortName evidence="1">GK</shortName>
    </alternativeName>
</protein>
<feature type="chain" id="PRO_1000020748" description="Glycerol kinase">
    <location>
        <begin position="1"/>
        <end position="517"/>
    </location>
</feature>
<feature type="binding site" evidence="1">
    <location>
        <position position="24"/>
    </location>
    <ligand>
        <name>ADP</name>
        <dbReference type="ChEBI" id="CHEBI:456216"/>
    </ligand>
</feature>
<feature type="binding site" evidence="1">
    <location>
        <position position="24"/>
    </location>
    <ligand>
        <name>ATP</name>
        <dbReference type="ChEBI" id="CHEBI:30616"/>
    </ligand>
</feature>
<feature type="binding site" evidence="1">
    <location>
        <position position="24"/>
    </location>
    <ligand>
        <name>sn-glycerol 3-phosphate</name>
        <dbReference type="ChEBI" id="CHEBI:57597"/>
    </ligand>
</feature>
<feature type="binding site" evidence="1">
    <location>
        <position position="25"/>
    </location>
    <ligand>
        <name>ATP</name>
        <dbReference type="ChEBI" id="CHEBI:30616"/>
    </ligand>
</feature>
<feature type="binding site" evidence="1">
    <location>
        <position position="26"/>
    </location>
    <ligand>
        <name>ATP</name>
        <dbReference type="ChEBI" id="CHEBI:30616"/>
    </ligand>
</feature>
<feature type="binding site" evidence="1">
    <location>
        <position position="28"/>
    </location>
    <ligand>
        <name>ADP</name>
        <dbReference type="ChEBI" id="CHEBI:456216"/>
    </ligand>
</feature>
<feature type="binding site" evidence="1">
    <location>
        <position position="94"/>
    </location>
    <ligand>
        <name>glycerol</name>
        <dbReference type="ChEBI" id="CHEBI:17754"/>
    </ligand>
</feature>
<feature type="binding site" evidence="1">
    <location>
        <position position="94"/>
    </location>
    <ligand>
        <name>sn-glycerol 3-phosphate</name>
        <dbReference type="ChEBI" id="CHEBI:57597"/>
    </ligand>
</feature>
<feature type="binding site" evidence="1">
    <location>
        <position position="95"/>
    </location>
    <ligand>
        <name>glycerol</name>
        <dbReference type="ChEBI" id="CHEBI:17754"/>
    </ligand>
</feature>
<feature type="binding site" evidence="1">
    <location>
        <position position="95"/>
    </location>
    <ligand>
        <name>sn-glycerol 3-phosphate</name>
        <dbReference type="ChEBI" id="CHEBI:57597"/>
    </ligand>
</feature>
<feature type="binding site" evidence="1">
    <location>
        <position position="146"/>
    </location>
    <ligand>
        <name>glycerol</name>
        <dbReference type="ChEBI" id="CHEBI:17754"/>
    </ligand>
</feature>
<feature type="binding site" evidence="1">
    <location>
        <position position="146"/>
    </location>
    <ligand>
        <name>sn-glycerol 3-phosphate</name>
        <dbReference type="ChEBI" id="CHEBI:57597"/>
    </ligand>
</feature>
<feature type="binding site" evidence="1">
    <location>
        <position position="261"/>
    </location>
    <ligand>
        <name>glycerol</name>
        <dbReference type="ChEBI" id="CHEBI:17754"/>
    </ligand>
</feature>
<feature type="binding site" evidence="1">
    <location>
        <position position="261"/>
    </location>
    <ligand>
        <name>sn-glycerol 3-phosphate</name>
        <dbReference type="ChEBI" id="CHEBI:57597"/>
    </ligand>
</feature>
<feature type="binding site" evidence="1">
    <location>
        <position position="262"/>
    </location>
    <ligand>
        <name>glycerol</name>
        <dbReference type="ChEBI" id="CHEBI:17754"/>
    </ligand>
</feature>
<feature type="binding site" evidence="1">
    <location>
        <position position="283"/>
    </location>
    <ligand>
        <name>ADP</name>
        <dbReference type="ChEBI" id="CHEBI:456216"/>
    </ligand>
</feature>
<feature type="binding site" evidence="1">
    <location>
        <position position="283"/>
    </location>
    <ligand>
        <name>ATP</name>
        <dbReference type="ChEBI" id="CHEBI:30616"/>
    </ligand>
</feature>
<feature type="binding site" evidence="1">
    <location>
        <position position="327"/>
    </location>
    <ligand>
        <name>ADP</name>
        <dbReference type="ChEBI" id="CHEBI:456216"/>
    </ligand>
</feature>
<feature type="binding site" evidence="1">
    <location>
        <position position="327"/>
    </location>
    <ligand>
        <name>ATP</name>
        <dbReference type="ChEBI" id="CHEBI:30616"/>
    </ligand>
</feature>
<feature type="binding site" evidence="1">
    <location>
        <position position="331"/>
    </location>
    <ligand>
        <name>ATP</name>
        <dbReference type="ChEBI" id="CHEBI:30616"/>
    </ligand>
</feature>
<feature type="binding site" evidence="1">
    <location>
        <position position="428"/>
    </location>
    <ligand>
        <name>ADP</name>
        <dbReference type="ChEBI" id="CHEBI:456216"/>
    </ligand>
</feature>
<feature type="binding site" evidence="1">
    <location>
        <position position="428"/>
    </location>
    <ligand>
        <name>ATP</name>
        <dbReference type="ChEBI" id="CHEBI:30616"/>
    </ligand>
</feature>
<feature type="binding site" evidence="1">
    <location>
        <position position="432"/>
    </location>
    <ligand>
        <name>ADP</name>
        <dbReference type="ChEBI" id="CHEBI:456216"/>
    </ligand>
</feature>
<gene>
    <name evidence="1" type="primary">glpK</name>
    <name type="ordered locus">MRA_3731</name>
</gene>
<accession>A5U920</accession>
<sequence>MSDAILGEQLAESSDFIAAIDQGTTSTRCMIFDHHGAEVARHQLEHEQILPRAGWVEHNPVEIWERTASVLISVLNATNLSPKDIAALGITNQRETTLVWNRHTGRPYYNAIVWQDTRTDRIASALDRDGRGNLIRRKAGLPPATYFSGGKLQWILENVDGVRAAAENGDALFGTPDTWVLWNLTGGPRGGVHVTDVTNASRTMLMDLETLDWDDELLSLFSIPRAMLPEIASSAPSEPYGVTLATGPVGGEVPITGVLGDQHAAMVGQVCLAPGEAKNTYGTGNFLLLNTGETIVRSNNGLLTTVCYQFGNAKPVYALEGSIAVTGSAVQWLRDQLGIISGAAQSEALARQVPDNGGMYFVPAFSGLFAPYWRSDARGAIVGLSRFNTNAHLARATLEAICYQSRDVVDAMEADSGVRLQVLKVDGGITGNDLCMQIQADVLGVDVVRPVVAETTALGVAYAAGLAVGFWAAPSDLRANWREDKRWTPTWDDDERAAGYAGWRKAVQRTLDWVDVS</sequence>
<proteinExistence type="inferred from homology"/>
<dbReference type="EC" id="2.7.1.30" evidence="1"/>
<dbReference type="EMBL" id="CP000611">
    <property type="protein sequence ID" value="ABQ75520.1"/>
    <property type="molecule type" value="Genomic_DNA"/>
</dbReference>
<dbReference type="RefSeq" id="WP_003899643.1">
    <property type="nucleotide sequence ID" value="NZ_CP016972.1"/>
</dbReference>
<dbReference type="SMR" id="A5U920"/>
<dbReference type="KEGG" id="mra:MRA_3731"/>
<dbReference type="eggNOG" id="COG0554">
    <property type="taxonomic scope" value="Bacteria"/>
</dbReference>
<dbReference type="HOGENOM" id="CLU_009281_2_3_11"/>
<dbReference type="UniPathway" id="UPA00618">
    <property type="reaction ID" value="UER00672"/>
</dbReference>
<dbReference type="Proteomes" id="UP000001988">
    <property type="component" value="Chromosome"/>
</dbReference>
<dbReference type="GO" id="GO:0005829">
    <property type="term" value="C:cytosol"/>
    <property type="evidence" value="ECO:0007669"/>
    <property type="project" value="TreeGrafter"/>
</dbReference>
<dbReference type="GO" id="GO:0005524">
    <property type="term" value="F:ATP binding"/>
    <property type="evidence" value="ECO:0007669"/>
    <property type="project" value="UniProtKB-UniRule"/>
</dbReference>
<dbReference type="GO" id="GO:0004370">
    <property type="term" value="F:glycerol kinase activity"/>
    <property type="evidence" value="ECO:0000250"/>
    <property type="project" value="UniProtKB"/>
</dbReference>
<dbReference type="GO" id="GO:0019563">
    <property type="term" value="P:glycerol catabolic process"/>
    <property type="evidence" value="ECO:0007669"/>
    <property type="project" value="UniProtKB-UniRule"/>
</dbReference>
<dbReference type="GO" id="GO:0006071">
    <property type="term" value="P:glycerol metabolic process"/>
    <property type="evidence" value="ECO:0000250"/>
    <property type="project" value="UniProtKB"/>
</dbReference>
<dbReference type="GO" id="GO:0006072">
    <property type="term" value="P:glycerol-3-phosphate metabolic process"/>
    <property type="evidence" value="ECO:0007669"/>
    <property type="project" value="InterPro"/>
</dbReference>
<dbReference type="CDD" id="cd07769">
    <property type="entry name" value="ASKHA_NBD_FGGY_GK"/>
    <property type="match status" value="1"/>
</dbReference>
<dbReference type="FunFam" id="3.30.420.40:FF:000007">
    <property type="entry name" value="Glycerol kinase"/>
    <property type="match status" value="1"/>
</dbReference>
<dbReference type="FunFam" id="3.30.420.40:FF:000008">
    <property type="entry name" value="Glycerol kinase"/>
    <property type="match status" value="1"/>
</dbReference>
<dbReference type="Gene3D" id="3.30.420.40">
    <property type="match status" value="2"/>
</dbReference>
<dbReference type="HAMAP" id="MF_00186">
    <property type="entry name" value="Glycerol_kin"/>
    <property type="match status" value="1"/>
</dbReference>
<dbReference type="InterPro" id="IPR043129">
    <property type="entry name" value="ATPase_NBD"/>
</dbReference>
<dbReference type="InterPro" id="IPR000577">
    <property type="entry name" value="Carb_kinase_FGGY"/>
</dbReference>
<dbReference type="InterPro" id="IPR018483">
    <property type="entry name" value="Carb_kinase_FGGY_CS"/>
</dbReference>
<dbReference type="InterPro" id="IPR018485">
    <property type="entry name" value="FGGY_C"/>
</dbReference>
<dbReference type="InterPro" id="IPR018484">
    <property type="entry name" value="FGGY_N"/>
</dbReference>
<dbReference type="InterPro" id="IPR005999">
    <property type="entry name" value="Glycerol_kin"/>
</dbReference>
<dbReference type="NCBIfam" id="TIGR01311">
    <property type="entry name" value="glycerol_kin"/>
    <property type="match status" value="1"/>
</dbReference>
<dbReference type="NCBIfam" id="NF000756">
    <property type="entry name" value="PRK00047.1"/>
    <property type="match status" value="1"/>
</dbReference>
<dbReference type="PANTHER" id="PTHR10196:SF69">
    <property type="entry name" value="GLYCEROL KINASE"/>
    <property type="match status" value="1"/>
</dbReference>
<dbReference type="PANTHER" id="PTHR10196">
    <property type="entry name" value="SUGAR KINASE"/>
    <property type="match status" value="1"/>
</dbReference>
<dbReference type="Pfam" id="PF02782">
    <property type="entry name" value="FGGY_C"/>
    <property type="match status" value="1"/>
</dbReference>
<dbReference type="Pfam" id="PF00370">
    <property type="entry name" value="FGGY_N"/>
    <property type="match status" value="1"/>
</dbReference>
<dbReference type="PIRSF" id="PIRSF000538">
    <property type="entry name" value="GlpK"/>
    <property type="match status" value="1"/>
</dbReference>
<dbReference type="SUPFAM" id="SSF53067">
    <property type="entry name" value="Actin-like ATPase domain"/>
    <property type="match status" value="2"/>
</dbReference>
<dbReference type="PROSITE" id="PS00933">
    <property type="entry name" value="FGGY_KINASES_1"/>
    <property type="match status" value="1"/>
</dbReference>
<dbReference type="PROSITE" id="PS00445">
    <property type="entry name" value="FGGY_KINASES_2"/>
    <property type="match status" value="1"/>
</dbReference>
<evidence type="ECO:0000255" key="1">
    <source>
        <dbReference type="HAMAP-Rule" id="MF_00186"/>
    </source>
</evidence>
<name>GLPK_MYCTA</name>
<keyword id="KW-0067">ATP-binding</keyword>
<keyword id="KW-0319">Glycerol metabolism</keyword>
<keyword id="KW-0418">Kinase</keyword>
<keyword id="KW-0547">Nucleotide-binding</keyword>
<keyword id="KW-1185">Reference proteome</keyword>
<keyword id="KW-0808">Transferase</keyword>